<keyword id="KW-1185">Reference proteome</keyword>
<keyword id="KW-0687">Ribonucleoprotein</keyword>
<keyword id="KW-0689">Ribosomal protein</keyword>
<keyword id="KW-0694">RNA-binding</keyword>
<keyword id="KW-0699">rRNA-binding</keyword>
<name>RL25_ERWT9</name>
<reference key="1">
    <citation type="journal article" date="2008" name="Environ. Microbiol.">
        <title>The genome of Erwinia tasmaniensis strain Et1/99, a non-pathogenic bacterium in the genus Erwinia.</title>
        <authorList>
            <person name="Kube M."/>
            <person name="Migdoll A.M."/>
            <person name="Mueller I."/>
            <person name="Kuhl H."/>
            <person name="Beck A."/>
            <person name="Reinhardt R."/>
            <person name="Geider K."/>
        </authorList>
    </citation>
    <scope>NUCLEOTIDE SEQUENCE [LARGE SCALE GENOMIC DNA]</scope>
    <source>
        <strain>DSM 17950 / CFBP 7177 / CIP 109463 / NCPPB 4357 / Et1/99</strain>
    </source>
</reference>
<comment type="function">
    <text evidence="1">This is one of the proteins that binds to the 5S RNA in the ribosome where it forms part of the central protuberance.</text>
</comment>
<comment type="subunit">
    <text evidence="1">Part of the 50S ribosomal subunit; part of the 5S rRNA/L5/L18/L25 subcomplex. Contacts the 5S rRNA. Binds to the 5S rRNA independently of L5 and L18.</text>
</comment>
<comment type="similarity">
    <text evidence="1">Belongs to the bacterial ribosomal protein bL25 family.</text>
</comment>
<organism>
    <name type="scientific">Erwinia tasmaniensis (strain DSM 17950 / CFBP 7177 / CIP 109463 / NCPPB 4357 / Et1/99)</name>
    <dbReference type="NCBI Taxonomy" id="465817"/>
    <lineage>
        <taxon>Bacteria</taxon>
        <taxon>Pseudomonadati</taxon>
        <taxon>Pseudomonadota</taxon>
        <taxon>Gammaproteobacteria</taxon>
        <taxon>Enterobacterales</taxon>
        <taxon>Erwiniaceae</taxon>
        <taxon>Erwinia</taxon>
    </lineage>
</organism>
<gene>
    <name evidence="1" type="primary">rplY</name>
    <name type="ordered locus">ETA_12600</name>
</gene>
<accession>B2VII8</accession>
<sequence>MFTINVETRKEQGKGASRRLRTANKFPAIIYGGNEAAVAIELDHDSVMNLQSKPGFYDEVLTLVVDGKETKVKVQAVQRHPFKPKLHHIDFVRA</sequence>
<evidence type="ECO:0000255" key="1">
    <source>
        <dbReference type="HAMAP-Rule" id="MF_01336"/>
    </source>
</evidence>
<evidence type="ECO:0000305" key="2"/>
<dbReference type="EMBL" id="CU468135">
    <property type="protein sequence ID" value="CAO96306.1"/>
    <property type="molecule type" value="Genomic_DNA"/>
</dbReference>
<dbReference type="RefSeq" id="WP_012441000.1">
    <property type="nucleotide sequence ID" value="NC_010694.1"/>
</dbReference>
<dbReference type="SMR" id="B2VII8"/>
<dbReference type="STRING" id="465817.ETA_12600"/>
<dbReference type="KEGG" id="eta:ETA_12600"/>
<dbReference type="eggNOG" id="COG1825">
    <property type="taxonomic scope" value="Bacteria"/>
</dbReference>
<dbReference type="HOGENOM" id="CLU_137946_0_0_6"/>
<dbReference type="OrthoDB" id="9806411at2"/>
<dbReference type="Proteomes" id="UP000001726">
    <property type="component" value="Chromosome"/>
</dbReference>
<dbReference type="GO" id="GO:0022625">
    <property type="term" value="C:cytosolic large ribosomal subunit"/>
    <property type="evidence" value="ECO:0007669"/>
    <property type="project" value="TreeGrafter"/>
</dbReference>
<dbReference type="GO" id="GO:0008097">
    <property type="term" value="F:5S rRNA binding"/>
    <property type="evidence" value="ECO:0007669"/>
    <property type="project" value="InterPro"/>
</dbReference>
<dbReference type="GO" id="GO:0003735">
    <property type="term" value="F:structural constituent of ribosome"/>
    <property type="evidence" value="ECO:0007669"/>
    <property type="project" value="InterPro"/>
</dbReference>
<dbReference type="GO" id="GO:0006412">
    <property type="term" value="P:translation"/>
    <property type="evidence" value="ECO:0007669"/>
    <property type="project" value="UniProtKB-UniRule"/>
</dbReference>
<dbReference type="CDD" id="cd00495">
    <property type="entry name" value="Ribosomal_L25_TL5_CTC"/>
    <property type="match status" value="1"/>
</dbReference>
<dbReference type="FunFam" id="2.40.240.10:FF:000002">
    <property type="entry name" value="50S ribosomal protein L25"/>
    <property type="match status" value="1"/>
</dbReference>
<dbReference type="Gene3D" id="2.40.240.10">
    <property type="entry name" value="Ribosomal Protein L25, Chain P"/>
    <property type="match status" value="1"/>
</dbReference>
<dbReference type="HAMAP" id="MF_01336">
    <property type="entry name" value="Ribosomal_bL25"/>
    <property type="match status" value="1"/>
</dbReference>
<dbReference type="InterPro" id="IPR020056">
    <property type="entry name" value="Rbsml_bL25/Gln-tRNA_synth_N"/>
</dbReference>
<dbReference type="InterPro" id="IPR011035">
    <property type="entry name" value="Ribosomal_bL25/Gln-tRNA_synth"/>
</dbReference>
<dbReference type="InterPro" id="IPR020055">
    <property type="entry name" value="Ribosomal_bL25_short"/>
</dbReference>
<dbReference type="InterPro" id="IPR029751">
    <property type="entry name" value="Ribosomal_L25_dom"/>
</dbReference>
<dbReference type="InterPro" id="IPR020930">
    <property type="entry name" value="Ribosomal_uL5_bac-type"/>
</dbReference>
<dbReference type="NCBIfam" id="NF004612">
    <property type="entry name" value="PRK05943.1"/>
    <property type="match status" value="1"/>
</dbReference>
<dbReference type="PANTHER" id="PTHR33284">
    <property type="entry name" value="RIBOSOMAL PROTEIN L25/GLN-TRNA SYNTHETASE, ANTI-CODON-BINDING DOMAIN-CONTAINING PROTEIN"/>
    <property type="match status" value="1"/>
</dbReference>
<dbReference type="PANTHER" id="PTHR33284:SF1">
    <property type="entry name" value="RIBOSOMAL PROTEIN L25_GLN-TRNA SYNTHETASE, ANTI-CODON-BINDING DOMAIN-CONTAINING PROTEIN"/>
    <property type="match status" value="1"/>
</dbReference>
<dbReference type="Pfam" id="PF01386">
    <property type="entry name" value="Ribosomal_L25p"/>
    <property type="match status" value="1"/>
</dbReference>
<dbReference type="SUPFAM" id="SSF50715">
    <property type="entry name" value="Ribosomal protein L25-like"/>
    <property type="match status" value="1"/>
</dbReference>
<proteinExistence type="inferred from homology"/>
<feature type="chain" id="PRO_1000142584" description="Large ribosomal subunit protein bL25">
    <location>
        <begin position="1"/>
        <end position="94"/>
    </location>
</feature>
<protein>
    <recommendedName>
        <fullName evidence="1">Large ribosomal subunit protein bL25</fullName>
    </recommendedName>
    <alternativeName>
        <fullName evidence="2">50S ribosomal protein L25</fullName>
    </alternativeName>
</protein>